<sequence length="335" mass="37380">MDRIVEIEKYSLDETYETSLRPSNFDGYIGQESIKKNLNIFITAAKKRNECLDHILFSGPAGLGKTTLANIISYEMDANIKTTAAPMIEKSGDLAAILTNLSEGDILFIDEIHRLSPAIEEVLYPAMEDYRLDIIIGSGPAAQTIKIDLPKFTLIGATTRAGMLSNPLRDRFGMQFRLEFYKDSELALILQKAALKLNKTCEEKAALEIAKRSRSTPRIALRLLKRVRDFADVNDEEIITEKRANEALNSLGVNELGFDAMDLRYLELLTAAKQKPIGLASIAAALSEDENTIEDVIEPYLLANGYIERTAKGRIASTKSYSALKLNYEKTLFEE</sequence>
<feature type="chain" id="PRO_1000001383" description="Holliday junction branch migration complex subunit RuvB">
    <location>
        <begin position="1"/>
        <end position="335"/>
    </location>
</feature>
<feature type="region of interest" description="Large ATPase domain (RuvB-L)" evidence="1">
    <location>
        <begin position="1"/>
        <end position="181"/>
    </location>
</feature>
<feature type="region of interest" description="Small ATPAse domain (RuvB-S)" evidence="1">
    <location>
        <begin position="182"/>
        <end position="252"/>
    </location>
</feature>
<feature type="region of interest" description="Head domain (RuvB-H)" evidence="1">
    <location>
        <begin position="255"/>
        <end position="335"/>
    </location>
</feature>
<feature type="binding site" evidence="1">
    <location>
        <position position="20"/>
    </location>
    <ligand>
        <name>ATP</name>
        <dbReference type="ChEBI" id="CHEBI:30616"/>
    </ligand>
</feature>
<feature type="binding site" evidence="1">
    <location>
        <position position="21"/>
    </location>
    <ligand>
        <name>ATP</name>
        <dbReference type="ChEBI" id="CHEBI:30616"/>
    </ligand>
</feature>
<feature type="binding site" evidence="1">
    <location>
        <position position="62"/>
    </location>
    <ligand>
        <name>ATP</name>
        <dbReference type="ChEBI" id="CHEBI:30616"/>
    </ligand>
</feature>
<feature type="binding site" evidence="1">
    <location>
        <position position="65"/>
    </location>
    <ligand>
        <name>ATP</name>
        <dbReference type="ChEBI" id="CHEBI:30616"/>
    </ligand>
</feature>
<feature type="binding site" evidence="1">
    <location>
        <position position="66"/>
    </location>
    <ligand>
        <name>ATP</name>
        <dbReference type="ChEBI" id="CHEBI:30616"/>
    </ligand>
</feature>
<feature type="binding site" evidence="1">
    <location>
        <position position="66"/>
    </location>
    <ligand>
        <name>Mg(2+)</name>
        <dbReference type="ChEBI" id="CHEBI:18420"/>
    </ligand>
</feature>
<feature type="binding site" evidence="1">
    <location>
        <position position="67"/>
    </location>
    <ligand>
        <name>ATP</name>
        <dbReference type="ChEBI" id="CHEBI:30616"/>
    </ligand>
</feature>
<feature type="binding site" evidence="1">
    <location>
        <begin position="128"/>
        <end position="130"/>
    </location>
    <ligand>
        <name>ATP</name>
        <dbReference type="ChEBI" id="CHEBI:30616"/>
    </ligand>
</feature>
<feature type="binding site" evidence="1">
    <location>
        <position position="171"/>
    </location>
    <ligand>
        <name>ATP</name>
        <dbReference type="ChEBI" id="CHEBI:30616"/>
    </ligand>
</feature>
<feature type="binding site" evidence="1">
    <location>
        <position position="181"/>
    </location>
    <ligand>
        <name>ATP</name>
        <dbReference type="ChEBI" id="CHEBI:30616"/>
    </ligand>
</feature>
<feature type="binding site" evidence="1">
    <location>
        <position position="218"/>
    </location>
    <ligand>
        <name>ATP</name>
        <dbReference type="ChEBI" id="CHEBI:30616"/>
    </ligand>
</feature>
<feature type="binding site" evidence="1">
    <location>
        <position position="309"/>
    </location>
    <ligand>
        <name>DNA</name>
        <dbReference type="ChEBI" id="CHEBI:16991"/>
    </ligand>
</feature>
<feature type="binding site" evidence="1">
    <location>
        <position position="314"/>
    </location>
    <ligand>
        <name>DNA</name>
        <dbReference type="ChEBI" id="CHEBI:16991"/>
    </ligand>
</feature>
<dbReference type="EC" id="3.6.4.-" evidence="1"/>
<dbReference type="EMBL" id="CP000768">
    <property type="protein sequence ID" value="ABS44533.1"/>
    <property type="molecule type" value="Genomic_DNA"/>
</dbReference>
<dbReference type="SMR" id="A7H1X6"/>
<dbReference type="KEGG" id="cjd:JJD26997_0287"/>
<dbReference type="HOGENOM" id="CLU_055599_1_0_7"/>
<dbReference type="Proteomes" id="UP000002302">
    <property type="component" value="Chromosome"/>
</dbReference>
<dbReference type="GO" id="GO:0005737">
    <property type="term" value="C:cytoplasm"/>
    <property type="evidence" value="ECO:0007669"/>
    <property type="project" value="UniProtKB-SubCell"/>
</dbReference>
<dbReference type="GO" id="GO:0048476">
    <property type="term" value="C:Holliday junction resolvase complex"/>
    <property type="evidence" value="ECO:0007669"/>
    <property type="project" value="UniProtKB-UniRule"/>
</dbReference>
<dbReference type="GO" id="GO:0005524">
    <property type="term" value="F:ATP binding"/>
    <property type="evidence" value="ECO:0007669"/>
    <property type="project" value="UniProtKB-UniRule"/>
</dbReference>
<dbReference type="GO" id="GO:0016887">
    <property type="term" value="F:ATP hydrolysis activity"/>
    <property type="evidence" value="ECO:0007669"/>
    <property type="project" value="InterPro"/>
</dbReference>
<dbReference type="GO" id="GO:0000400">
    <property type="term" value="F:four-way junction DNA binding"/>
    <property type="evidence" value="ECO:0007669"/>
    <property type="project" value="UniProtKB-UniRule"/>
</dbReference>
<dbReference type="GO" id="GO:0009378">
    <property type="term" value="F:four-way junction helicase activity"/>
    <property type="evidence" value="ECO:0007669"/>
    <property type="project" value="InterPro"/>
</dbReference>
<dbReference type="GO" id="GO:0006310">
    <property type="term" value="P:DNA recombination"/>
    <property type="evidence" value="ECO:0007669"/>
    <property type="project" value="UniProtKB-UniRule"/>
</dbReference>
<dbReference type="GO" id="GO:0006281">
    <property type="term" value="P:DNA repair"/>
    <property type="evidence" value="ECO:0007669"/>
    <property type="project" value="UniProtKB-UniRule"/>
</dbReference>
<dbReference type="CDD" id="cd00009">
    <property type="entry name" value="AAA"/>
    <property type="match status" value="1"/>
</dbReference>
<dbReference type="Gene3D" id="1.10.8.60">
    <property type="match status" value="1"/>
</dbReference>
<dbReference type="Gene3D" id="3.40.50.300">
    <property type="entry name" value="P-loop containing nucleotide triphosphate hydrolases"/>
    <property type="match status" value="1"/>
</dbReference>
<dbReference type="Gene3D" id="1.10.10.10">
    <property type="entry name" value="Winged helix-like DNA-binding domain superfamily/Winged helix DNA-binding domain"/>
    <property type="match status" value="1"/>
</dbReference>
<dbReference type="HAMAP" id="MF_00016">
    <property type="entry name" value="DNA_HJ_migration_RuvB"/>
    <property type="match status" value="1"/>
</dbReference>
<dbReference type="InterPro" id="IPR003593">
    <property type="entry name" value="AAA+_ATPase"/>
</dbReference>
<dbReference type="InterPro" id="IPR041445">
    <property type="entry name" value="AAA_lid_4"/>
</dbReference>
<dbReference type="InterPro" id="IPR004605">
    <property type="entry name" value="DNA_helicase_Holl-junc_RuvB"/>
</dbReference>
<dbReference type="InterPro" id="IPR027417">
    <property type="entry name" value="P-loop_NTPase"/>
</dbReference>
<dbReference type="InterPro" id="IPR008824">
    <property type="entry name" value="RuvB-like_N"/>
</dbReference>
<dbReference type="InterPro" id="IPR008823">
    <property type="entry name" value="RuvB_C"/>
</dbReference>
<dbReference type="InterPro" id="IPR036388">
    <property type="entry name" value="WH-like_DNA-bd_sf"/>
</dbReference>
<dbReference type="InterPro" id="IPR036390">
    <property type="entry name" value="WH_DNA-bd_sf"/>
</dbReference>
<dbReference type="NCBIfam" id="NF000868">
    <property type="entry name" value="PRK00080.1"/>
    <property type="match status" value="1"/>
</dbReference>
<dbReference type="NCBIfam" id="TIGR00635">
    <property type="entry name" value="ruvB"/>
    <property type="match status" value="1"/>
</dbReference>
<dbReference type="PANTHER" id="PTHR42848">
    <property type="match status" value="1"/>
</dbReference>
<dbReference type="PANTHER" id="PTHR42848:SF1">
    <property type="entry name" value="HOLLIDAY JUNCTION BRANCH MIGRATION COMPLEX SUBUNIT RUVB"/>
    <property type="match status" value="1"/>
</dbReference>
<dbReference type="Pfam" id="PF17864">
    <property type="entry name" value="AAA_lid_4"/>
    <property type="match status" value="1"/>
</dbReference>
<dbReference type="Pfam" id="PF05491">
    <property type="entry name" value="RuvB_C"/>
    <property type="match status" value="1"/>
</dbReference>
<dbReference type="Pfam" id="PF05496">
    <property type="entry name" value="RuvB_N"/>
    <property type="match status" value="1"/>
</dbReference>
<dbReference type="SMART" id="SM00382">
    <property type="entry name" value="AAA"/>
    <property type="match status" value="1"/>
</dbReference>
<dbReference type="SUPFAM" id="SSF52540">
    <property type="entry name" value="P-loop containing nucleoside triphosphate hydrolases"/>
    <property type="match status" value="1"/>
</dbReference>
<dbReference type="SUPFAM" id="SSF46785">
    <property type="entry name" value="Winged helix' DNA-binding domain"/>
    <property type="match status" value="1"/>
</dbReference>
<reference key="1">
    <citation type="submission" date="2007-07" db="EMBL/GenBank/DDBJ databases">
        <title>Complete genome sequence of Campylobacter jejuni subsp doylei 269.97 isolated from human blood.</title>
        <authorList>
            <person name="Fouts D.E."/>
            <person name="Mongodin E.F."/>
            <person name="Puiu D."/>
            <person name="Sebastian Y."/>
            <person name="Miller W.G."/>
            <person name="Mandrell R.E."/>
            <person name="Lastovica A.J."/>
            <person name="Nelson K.E."/>
        </authorList>
    </citation>
    <scope>NUCLEOTIDE SEQUENCE [LARGE SCALE GENOMIC DNA]</scope>
    <source>
        <strain>ATCC BAA-1458 / RM4099 / 269.97</strain>
    </source>
</reference>
<keyword id="KW-0067">ATP-binding</keyword>
<keyword id="KW-0963">Cytoplasm</keyword>
<keyword id="KW-0227">DNA damage</keyword>
<keyword id="KW-0233">DNA recombination</keyword>
<keyword id="KW-0234">DNA repair</keyword>
<keyword id="KW-0238">DNA-binding</keyword>
<keyword id="KW-0378">Hydrolase</keyword>
<keyword id="KW-0547">Nucleotide-binding</keyword>
<gene>
    <name evidence="1" type="primary">ruvB</name>
    <name type="ordered locus">JJD26997_0287</name>
</gene>
<name>RUVB_CAMJD</name>
<accession>A7H1X6</accession>
<proteinExistence type="inferred from homology"/>
<protein>
    <recommendedName>
        <fullName evidence="1">Holliday junction branch migration complex subunit RuvB</fullName>
        <ecNumber evidence="1">3.6.4.-</ecNumber>
    </recommendedName>
</protein>
<comment type="function">
    <text evidence="1">The RuvA-RuvB-RuvC complex processes Holliday junction (HJ) DNA during genetic recombination and DNA repair, while the RuvA-RuvB complex plays an important role in the rescue of blocked DNA replication forks via replication fork reversal (RFR). RuvA specifically binds to HJ cruciform DNA, conferring on it an open structure. The RuvB hexamer acts as an ATP-dependent pump, pulling dsDNA into and through the RuvAB complex. RuvB forms 2 homohexamers on either side of HJ DNA bound by 1 or 2 RuvA tetramers; 4 subunits per hexamer contact DNA at a time. Coordinated motions by a converter formed by DNA-disengaged RuvB subunits stimulates ATP hydrolysis and nucleotide exchange. Immobilization of the converter enables RuvB to convert the ATP-contained energy into a lever motion, pulling 2 nucleotides of DNA out of the RuvA tetramer per ATP hydrolyzed, thus driving DNA branch migration. The RuvB motors rotate together with the DNA substrate, which together with the progressing nucleotide cycle form the mechanistic basis for DNA recombination by continuous HJ branch migration. Branch migration allows RuvC to scan DNA until it finds its consensus sequence, where it cleaves and resolves cruciform DNA.</text>
</comment>
<comment type="catalytic activity">
    <reaction evidence="1">
        <text>ATP + H2O = ADP + phosphate + H(+)</text>
        <dbReference type="Rhea" id="RHEA:13065"/>
        <dbReference type="ChEBI" id="CHEBI:15377"/>
        <dbReference type="ChEBI" id="CHEBI:15378"/>
        <dbReference type="ChEBI" id="CHEBI:30616"/>
        <dbReference type="ChEBI" id="CHEBI:43474"/>
        <dbReference type="ChEBI" id="CHEBI:456216"/>
    </reaction>
</comment>
<comment type="subunit">
    <text evidence="1">Homohexamer. Forms an RuvA(8)-RuvB(12)-Holliday junction (HJ) complex. HJ DNA is sandwiched between 2 RuvA tetramers; dsDNA enters through RuvA and exits via RuvB. An RuvB hexamer assembles on each DNA strand where it exits the tetramer. Each RuvB hexamer is contacted by two RuvA subunits (via domain III) on 2 adjacent RuvB subunits; this complex drives branch migration. In the full resolvosome a probable DNA-RuvA(4)-RuvB(12)-RuvC(2) complex forms which resolves the HJ.</text>
</comment>
<comment type="subcellular location">
    <subcellularLocation>
        <location evidence="1">Cytoplasm</location>
    </subcellularLocation>
</comment>
<comment type="domain">
    <text evidence="1">Has 3 domains, the large (RuvB-L) and small ATPase (RuvB-S) domains and the C-terminal head (RuvB-H) domain. The head domain binds DNA, while the ATPase domains jointly bind ATP, ADP or are empty depending on the state of the subunit in the translocation cycle. During a single DNA translocation step the structure of each domain remains the same, but their relative positions change.</text>
</comment>
<comment type="similarity">
    <text evidence="1">Belongs to the RuvB family.</text>
</comment>
<organism>
    <name type="scientific">Campylobacter jejuni subsp. doylei (strain ATCC BAA-1458 / RM4099 / 269.97)</name>
    <dbReference type="NCBI Taxonomy" id="360109"/>
    <lineage>
        <taxon>Bacteria</taxon>
        <taxon>Pseudomonadati</taxon>
        <taxon>Campylobacterota</taxon>
        <taxon>Epsilonproteobacteria</taxon>
        <taxon>Campylobacterales</taxon>
        <taxon>Campylobacteraceae</taxon>
        <taxon>Campylobacter</taxon>
    </lineage>
</organism>
<evidence type="ECO:0000255" key="1">
    <source>
        <dbReference type="HAMAP-Rule" id="MF_00016"/>
    </source>
</evidence>